<keyword id="KW-0010">Activator</keyword>
<keyword id="KW-0963">Cytoplasm</keyword>
<keyword id="KW-0238">DNA-binding</keyword>
<keyword id="KW-1185">Reference proteome</keyword>
<keyword id="KW-0804">Transcription</keyword>
<keyword id="KW-0805">Transcription regulation</keyword>
<name>CSPD_BACCR</name>
<dbReference type="EMBL" id="AE016877">
    <property type="protein sequence ID" value="AAP11759.1"/>
    <property type="molecule type" value="Genomic_DNA"/>
</dbReference>
<dbReference type="RefSeq" id="NP_834558.1">
    <property type="nucleotide sequence ID" value="NC_004722.1"/>
</dbReference>
<dbReference type="RefSeq" id="WP_001193054.1">
    <property type="nucleotide sequence ID" value="NZ_CP138336.1"/>
</dbReference>
<dbReference type="SMR" id="Q816H3"/>
<dbReference type="STRING" id="226900.BC_4859"/>
<dbReference type="GeneID" id="93006229"/>
<dbReference type="KEGG" id="bce:BC4859"/>
<dbReference type="PATRIC" id="fig|226900.8.peg.5030"/>
<dbReference type="HOGENOM" id="CLU_117621_6_1_9"/>
<dbReference type="OrthoDB" id="9805039at2"/>
<dbReference type="Proteomes" id="UP000001417">
    <property type="component" value="Chromosome"/>
</dbReference>
<dbReference type="GO" id="GO:0005737">
    <property type="term" value="C:cytoplasm"/>
    <property type="evidence" value="ECO:0007669"/>
    <property type="project" value="UniProtKB-SubCell"/>
</dbReference>
<dbReference type="GO" id="GO:0003677">
    <property type="term" value="F:DNA binding"/>
    <property type="evidence" value="ECO:0007669"/>
    <property type="project" value="UniProtKB-KW"/>
</dbReference>
<dbReference type="GO" id="GO:0003676">
    <property type="term" value="F:nucleic acid binding"/>
    <property type="evidence" value="ECO:0000318"/>
    <property type="project" value="GO_Central"/>
</dbReference>
<dbReference type="GO" id="GO:0010468">
    <property type="term" value="P:regulation of gene expression"/>
    <property type="evidence" value="ECO:0000318"/>
    <property type="project" value="GO_Central"/>
</dbReference>
<dbReference type="CDD" id="cd04458">
    <property type="entry name" value="CSP_CDS"/>
    <property type="match status" value="1"/>
</dbReference>
<dbReference type="FunFam" id="2.40.50.140:FF:000006">
    <property type="entry name" value="Cold shock protein CspC"/>
    <property type="match status" value="1"/>
</dbReference>
<dbReference type="Gene3D" id="6.20.370.130">
    <property type="match status" value="1"/>
</dbReference>
<dbReference type="Gene3D" id="2.40.50.140">
    <property type="entry name" value="Nucleic acid-binding proteins"/>
    <property type="match status" value="1"/>
</dbReference>
<dbReference type="InterPro" id="IPR012156">
    <property type="entry name" value="Cold_shock_CspA"/>
</dbReference>
<dbReference type="InterPro" id="IPR050181">
    <property type="entry name" value="Cold_shock_domain"/>
</dbReference>
<dbReference type="InterPro" id="IPR011129">
    <property type="entry name" value="CSD"/>
</dbReference>
<dbReference type="InterPro" id="IPR019844">
    <property type="entry name" value="CSD_CS"/>
</dbReference>
<dbReference type="InterPro" id="IPR002059">
    <property type="entry name" value="CSP_DNA-bd"/>
</dbReference>
<dbReference type="InterPro" id="IPR012340">
    <property type="entry name" value="NA-bd_OB-fold"/>
</dbReference>
<dbReference type="PANTHER" id="PTHR11544">
    <property type="entry name" value="COLD SHOCK DOMAIN CONTAINING PROTEINS"/>
    <property type="match status" value="1"/>
</dbReference>
<dbReference type="Pfam" id="PF00313">
    <property type="entry name" value="CSD"/>
    <property type="match status" value="1"/>
</dbReference>
<dbReference type="PIRSF" id="PIRSF002599">
    <property type="entry name" value="Cold_shock_A"/>
    <property type="match status" value="1"/>
</dbReference>
<dbReference type="PRINTS" id="PR00050">
    <property type="entry name" value="COLDSHOCK"/>
</dbReference>
<dbReference type="SMART" id="SM00357">
    <property type="entry name" value="CSP"/>
    <property type="match status" value="1"/>
</dbReference>
<dbReference type="SUPFAM" id="SSF50249">
    <property type="entry name" value="Nucleic acid-binding proteins"/>
    <property type="match status" value="1"/>
</dbReference>
<dbReference type="PROSITE" id="PS00352">
    <property type="entry name" value="CSD_1"/>
    <property type="match status" value="1"/>
</dbReference>
<dbReference type="PROSITE" id="PS51857">
    <property type="entry name" value="CSD_2"/>
    <property type="match status" value="1"/>
</dbReference>
<proteinExistence type="inferred from homology"/>
<evidence type="ECO:0000250" key="1"/>
<evidence type="ECO:0000305" key="2"/>
<reference key="1">
    <citation type="journal article" date="2003" name="Nature">
        <title>Genome sequence of Bacillus cereus and comparative analysis with Bacillus anthracis.</title>
        <authorList>
            <person name="Ivanova N."/>
            <person name="Sorokin A."/>
            <person name="Anderson I."/>
            <person name="Galleron N."/>
            <person name="Candelon B."/>
            <person name="Kapatral V."/>
            <person name="Bhattacharyya A."/>
            <person name="Reznik G."/>
            <person name="Mikhailova N."/>
            <person name="Lapidus A."/>
            <person name="Chu L."/>
            <person name="Mazur M."/>
            <person name="Goltsman E."/>
            <person name="Larsen N."/>
            <person name="D'Souza M."/>
            <person name="Walunas T."/>
            <person name="Grechkin Y."/>
            <person name="Pusch G."/>
            <person name="Haselkorn R."/>
            <person name="Fonstein M."/>
            <person name="Ehrlich S.D."/>
            <person name="Overbeek R."/>
            <person name="Kyrpides N.C."/>
        </authorList>
    </citation>
    <scope>NUCLEOTIDE SEQUENCE [LARGE SCALE GENOMIC DNA]</scope>
    <source>
        <strain>ATCC 14579 / DSM 31 / CCUG 7414 / JCM 2152 / NBRC 15305 / NCIMB 9373 / NCTC 2599 / NRRL B-3711</strain>
    </source>
</reference>
<sequence>MQTGKVKWFNSEKGFGFIEVEGGDDVFVHFSAIQGDGFKTLEEGQEVSFEIVEGNRGPQAANVTKN</sequence>
<protein>
    <recommendedName>
        <fullName>Cold shock-like protein CspD</fullName>
    </recommendedName>
</protein>
<gene>
    <name type="primary">cspD</name>
    <name type="ordered locus">BC_4859</name>
</gene>
<feature type="chain" id="PRO_0000100290" description="Cold shock-like protein CspD">
    <location>
        <begin position="1"/>
        <end position="66"/>
    </location>
</feature>
<feature type="domain" description="CSD">
    <location>
        <begin position="4"/>
        <end position="63"/>
    </location>
</feature>
<comment type="subunit">
    <text evidence="2">Homodimer.</text>
</comment>
<comment type="subcellular location">
    <subcellularLocation>
        <location evidence="1">Cytoplasm</location>
    </subcellularLocation>
</comment>
<organism>
    <name type="scientific">Bacillus cereus (strain ATCC 14579 / DSM 31 / CCUG 7414 / JCM 2152 / NBRC 15305 / NCIMB 9373 / NCTC 2599 / NRRL B-3711)</name>
    <dbReference type="NCBI Taxonomy" id="226900"/>
    <lineage>
        <taxon>Bacteria</taxon>
        <taxon>Bacillati</taxon>
        <taxon>Bacillota</taxon>
        <taxon>Bacilli</taxon>
        <taxon>Bacillales</taxon>
        <taxon>Bacillaceae</taxon>
        <taxon>Bacillus</taxon>
        <taxon>Bacillus cereus group</taxon>
    </lineage>
</organism>
<accession>Q816H3</accession>